<name>RIBD1_BUCAP</name>
<dbReference type="EC" id="3.5.4.26"/>
<dbReference type="EMBL" id="AE013218">
    <property type="protein sequence ID" value="AAM67988.1"/>
    <property type="molecule type" value="Genomic_DNA"/>
</dbReference>
<dbReference type="SMR" id="Q8K9A4"/>
<dbReference type="STRING" id="198804.BUsg_445"/>
<dbReference type="KEGG" id="bas:BUsg_445"/>
<dbReference type="eggNOG" id="COG0117">
    <property type="taxonomic scope" value="Bacteria"/>
</dbReference>
<dbReference type="HOGENOM" id="CLU_036590_10_0_6"/>
<dbReference type="UniPathway" id="UPA00275">
    <property type="reaction ID" value="UER00401"/>
</dbReference>
<dbReference type="Proteomes" id="UP000000416">
    <property type="component" value="Chromosome"/>
</dbReference>
<dbReference type="GO" id="GO:0008835">
    <property type="term" value="F:diaminohydroxyphosphoribosylaminopyrimidine deaminase activity"/>
    <property type="evidence" value="ECO:0007669"/>
    <property type="project" value="UniProtKB-EC"/>
</dbReference>
<dbReference type="GO" id="GO:0008270">
    <property type="term" value="F:zinc ion binding"/>
    <property type="evidence" value="ECO:0007669"/>
    <property type="project" value="InterPro"/>
</dbReference>
<dbReference type="GO" id="GO:0009231">
    <property type="term" value="P:riboflavin biosynthetic process"/>
    <property type="evidence" value="ECO:0007669"/>
    <property type="project" value="UniProtKB-UniPathway"/>
</dbReference>
<dbReference type="CDD" id="cd01284">
    <property type="entry name" value="Riboflavin_deaminase-reductase"/>
    <property type="match status" value="1"/>
</dbReference>
<dbReference type="FunFam" id="3.40.140.10:FF:000025">
    <property type="entry name" value="Riboflavin biosynthesis protein RibD"/>
    <property type="match status" value="1"/>
</dbReference>
<dbReference type="Gene3D" id="3.40.140.10">
    <property type="entry name" value="Cytidine Deaminase, domain 2"/>
    <property type="match status" value="1"/>
</dbReference>
<dbReference type="InterPro" id="IPR016192">
    <property type="entry name" value="APOBEC/CMP_deaminase_Zn-bd"/>
</dbReference>
<dbReference type="InterPro" id="IPR002125">
    <property type="entry name" value="CMP_dCMP_dom"/>
</dbReference>
<dbReference type="InterPro" id="IPR016193">
    <property type="entry name" value="Cytidine_deaminase-like"/>
</dbReference>
<dbReference type="InterPro" id="IPR004794">
    <property type="entry name" value="Eubact_RibD"/>
</dbReference>
<dbReference type="NCBIfam" id="TIGR00326">
    <property type="entry name" value="eubact_ribD"/>
    <property type="match status" value="1"/>
</dbReference>
<dbReference type="PANTHER" id="PTHR11079">
    <property type="entry name" value="CYTOSINE DEAMINASE FAMILY MEMBER"/>
    <property type="match status" value="1"/>
</dbReference>
<dbReference type="PANTHER" id="PTHR11079:SF162">
    <property type="entry name" value="RIBOFLAVIN BIOSYNTHESIS PROTEIN PYRD, CHLOROPLASTIC"/>
    <property type="match status" value="1"/>
</dbReference>
<dbReference type="Pfam" id="PF00383">
    <property type="entry name" value="dCMP_cyt_deam_1"/>
    <property type="match status" value="1"/>
</dbReference>
<dbReference type="SUPFAM" id="SSF53927">
    <property type="entry name" value="Cytidine deaminase-like"/>
    <property type="match status" value="1"/>
</dbReference>
<dbReference type="PROSITE" id="PS00903">
    <property type="entry name" value="CYT_DCMP_DEAMINASES_1"/>
    <property type="match status" value="1"/>
</dbReference>
<dbReference type="PROSITE" id="PS51747">
    <property type="entry name" value="CYT_DCMP_DEAMINASES_2"/>
    <property type="match status" value="1"/>
</dbReference>
<keyword id="KW-0378">Hydrolase</keyword>
<keyword id="KW-0479">Metal-binding</keyword>
<keyword id="KW-0686">Riboflavin biosynthesis</keyword>
<keyword id="KW-0862">Zinc</keyword>
<reference key="1">
    <citation type="journal article" date="2002" name="Science">
        <title>50 million years of genomic stasis in endosymbiotic bacteria.</title>
        <authorList>
            <person name="Tamas I."/>
            <person name="Klasson L."/>
            <person name="Canbaeck B."/>
            <person name="Naeslund A.K."/>
            <person name="Eriksson A.-S."/>
            <person name="Wernegreen J.J."/>
            <person name="Sandstroem J.P."/>
            <person name="Moran N.A."/>
            <person name="Andersson S.G.E."/>
        </authorList>
    </citation>
    <scope>NUCLEOTIDE SEQUENCE [LARGE SCALE GENOMIC DNA]</scope>
    <source>
        <strain>Sg</strain>
    </source>
</reference>
<protein>
    <recommendedName>
        <fullName>Diaminohydroxyphosphoribosylamino-pyrimidine deaminase</fullName>
        <shortName>DRAP deaminase</shortName>
        <ecNumber>3.5.4.26</ecNumber>
    </recommendedName>
    <alternativeName>
        <fullName>Riboflavin-specific deaminase</fullName>
    </alternativeName>
</protein>
<gene>
    <name type="primary">ribD1</name>
    <name type="ordered locus">BUsg_445</name>
</gene>
<organism>
    <name type="scientific">Buchnera aphidicola subsp. Schizaphis graminum (strain Sg)</name>
    <dbReference type="NCBI Taxonomy" id="198804"/>
    <lineage>
        <taxon>Bacteria</taxon>
        <taxon>Pseudomonadati</taxon>
        <taxon>Pseudomonadota</taxon>
        <taxon>Gammaproteobacteria</taxon>
        <taxon>Enterobacterales</taxon>
        <taxon>Erwiniaceae</taxon>
        <taxon>Buchnera</taxon>
    </lineage>
</organism>
<comment type="catalytic activity">
    <reaction>
        <text>2,5-diamino-6-hydroxy-4-(5-phosphoribosylamino)-pyrimidine + H2O + H(+) = 5-amino-6-(5-phospho-D-ribosylamino)uracil + NH4(+)</text>
        <dbReference type="Rhea" id="RHEA:21868"/>
        <dbReference type="ChEBI" id="CHEBI:15377"/>
        <dbReference type="ChEBI" id="CHEBI:15378"/>
        <dbReference type="ChEBI" id="CHEBI:28938"/>
        <dbReference type="ChEBI" id="CHEBI:58453"/>
        <dbReference type="ChEBI" id="CHEBI:58614"/>
        <dbReference type="EC" id="3.5.4.26"/>
    </reaction>
</comment>
<comment type="cofactor">
    <cofactor evidence="1">
        <name>Zn(2+)</name>
        <dbReference type="ChEBI" id="CHEBI:29105"/>
    </cofactor>
    <text evidence="1">Binds 1 zinc ion.</text>
</comment>
<comment type="pathway">
    <text>Cofactor biosynthesis; riboflavin biosynthesis; 5-amino-6-(D-ribitylamino)uracil from GTP: step 2/4.</text>
</comment>
<comment type="similarity">
    <text evidence="3">Belongs to the cytidine and deoxycytidylate deaminase family.</text>
</comment>
<accession>Q8K9A4</accession>
<evidence type="ECO:0000250" key="1"/>
<evidence type="ECO:0000255" key="2">
    <source>
        <dbReference type="PROSITE-ProRule" id="PRU01083"/>
    </source>
</evidence>
<evidence type="ECO:0000305" key="3"/>
<feature type="chain" id="PRO_0000171726" description="Diaminohydroxyphosphoribosylamino-pyrimidine deaminase">
    <location>
        <begin position="1"/>
        <end position="147"/>
    </location>
</feature>
<feature type="domain" description="CMP/dCMP-type deaminase" evidence="2">
    <location>
        <begin position="1"/>
        <end position="122"/>
    </location>
</feature>
<feature type="active site" description="Proton donor" evidence="1">
    <location>
        <position position="52"/>
    </location>
</feature>
<feature type="binding site" evidence="1">
    <location>
        <position position="50"/>
    </location>
    <ligand>
        <name>Zn(2+)</name>
        <dbReference type="ChEBI" id="CHEBI:29105"/>
        <note>catalytic</note>
    </ligand>
</feature>
<feature type="binding site" evidence="1">
    <location>
        <position position="75"/>
    </location>
    <ligand>
        <name>Zn(2+)</name>
        <dbReference type="ChEBI" id="CHEBI:29105"/>
        <note>catalytic</note>
    </ligand>
</feature>
<feature type="binding site" evidence="1">
    <location>
        <position position="84"/>
    </location>
    <ligand>
        <name>Zn(2+)</name>
        <dbReference type="ChEBI" id="CHEBI:29105"/>
        <note>catalytic</note>
    </ligand>
</feature>
<proteinExistence type="inferred from homology"/>
<sequence length="147" mass="16233">MKDRFYMTRAIKLSKLGEFTTSPNPNVGCVIVQNKKIVGEGWHKKYGENHAEINALNMAGEKAKGSTAYITLEPCNHFGKTPPCCDAIIQSGIKNVIISSLDPNPKVSGKGVLYLRKKGISVKIGLMSKESQKYNKGFFKRMRTGLP</sequence>